<sequence>MRFPSMGTSDVAGVRGDVPSLPPRLIKTQNGFTVLYRNTYLYSKYRAQDAHERAVARLAVKPHTLVLCCAPVLGHGLCALLTRMPPSSFLLCLECDLQLMHLFMQHAPRQLITAQNVYVLYTTHITQVLHTVERLTRFPFKQILKIAGSGAYAQYRNFYDESEQNIRTLIDTFWINKITLIHSGRNYARNIFSNYITQLQNPSHIHHLVPQSIDKPLLIVGAGPALDACRSFCARMKDTIFLLAVDVACNALLPDIVPDAVVLLESQFWIEQAFIGTLPRTVALFADLSAFPRAVRAANVPTHFFFTPYTHAAFIKRAQNAGVVPLSIHPSGSVGLAALQLALRLRKKGVPIFHTGLNFSWNKGFTHARGSAPVQRLYHSTTRLHSLYPDCALFPEGIRSLKGKRYAVQSIPNLVHYAHAYRTLCAEHPHLYDLDQEGLALTTSHTVSHAQACEIITHCCTRRHRTHVPILHTQDAQISFAFSQKPAEDFCLRVKELLTTERAALLQLKHMLTTATPSNQDVIRALIRRSDYLYLHFPDGERAEYLEYNFLCRVRAELDFFLKLLSRIPSSLD</sequence>
<keyword id="KW-1185">Reference proteome</keyword>
<proteinExistence type="predicted"/>
<dbReference type="EMBL" id="AE000520">
    <property type="protein sequence ID" value="AAC65889.1"/>
    <property type="molecule type" value="Genomic_DNA"/>
</dbReference>
<dbReference type="PIR" id="C71264">
    <property type="entry name" value="C71264"/>
</dbReference>
<dbReference type="STRING" id="243276.TP_0930"/>
<dbReference type="EnsemblBacteria" id="AAC65889">
    <property type="protein sequence ID" value="AAC65889"/>
    <property type="gene ID" value="TP_0930"/>
</dbReference>
<dbReference type="KEGG" id="tpa:TP_0930"/>
<dbReference type="KEGG" id="tpw:TPANIC_0930"/>
<dbReference type="eggNOG" id="COG2604">
    <property type="taxonomic scope" value="Bacteria"/>
</dbReference>
<dbReference type="HOGENOM" id="CLU_033812_0_0_12"/>
<dbReference type="OrthoDB" id="362850at2"/>
<dbReference type="Proteomes" id="UP000000811">
    <property type="component" value="Chromosome"/>
</dbReference>
<dbReference type="InterPro" id="IPR002826">
    <property type="entry name" value="MptE-like"/>
</dbReference>
<dbReference type="PANTHER" id="PTHR41786:SF1">
    <property type="entry name" value="6-HYDROXYMETHYLPTERIN DIPHOSPHOKINASE MPTE-LIKE DOMAIN-CONTAINING PROTEIN"/>
    <property type="match status" value="1"/>
</dbReference>
<dbReference type="PANTHER" id="PTHR41786">
    <property type="entry name" value="MOTILITY ACCESSORY FACTOR MAF"/>
    <property type="match status" value="1"/>
</dbReference>
<dbReference type="Pfam" id="PF01973">
    <property type="entry name" value="MptE-like"/>
    <property type="match status" value="1"/>
</dbReference>
<protein>
    <recommendedName>
        <fullName>Uncharacterized protein TP_0930</fullName>
    </recommendedName>
</protein>
<gene>
    <name type="ordered locus">TP_0930</name>
</gene>
<reference key="1">
    <citation type="journal article" date="1998" name="Science">
        <title>Complete genome sequence of Treponema pallidum, the syphilis spirochete.</title>
        <authorList>
            <person name="Fraser C.M."/>
            <person name="Norris S.J."/>
            <person name="Weinstock G.M."/>
            <person name="White O."/>
            <person name="Sutton G.G."/>
            <person name="Dodson R.J."/>
            <person name="Gwinn M.L."/>
            <person name="Hickey E.K."/>
            <person name="Clayton R.A."/>
            <person name="Ketchum K.A."/>
            <person name="Sodergren E."/>
            <person name="Hardham J.M."/>
            <person name="McLeod M.P."/>
            <person name="Salzberg S.L."/>
            <person name="Peterson J.D."/>
            <person name="Khalak H.G."/>
            <person name="Richardson D.L."/>
            <person name="Howell J.K."/>
            <person name="Chidambaram M."/>
            <person name="Utterback T.R."/>
            <person name="McDonald L.A."/>
            <person name="Artiach P."/>
            <person name="Bowman C."/>
            <person name="Cotton M.D."/>
            <person name="Fujii C."/>
            <person name="Garland S.A."/>
            <person name="Hatch B."/>
            <person name="Horst K."/>
            <person name="Roberts K.M."/>
            <person name="Sandusky M."/>
            <person name="Weidman J.F."/>
            <person name="Smith H.O."/>
            <person name="Venter J.C."/>
        </authorList>
    </citation>
    <scope>NUCLEOTIDE SEQUENCE [LARGE SCALE GENOMIC DNA]</scope>
    <source>
        <strain>Nichols</strain>
    </source>
</reference>
<feature type="chain" id="PRO_0000202356" description="Uncharacterized protein TP_0930">
    <location>
        <begin position="1"/>
        <end position="573"/>
    </location>
</feature>
<organism>
    <name type="scientific">Treponema pallidum (strain Nichols)</name>
    <dbReference type="NCBI Taxonomy" id="243276"/>
    <lineage>
        <taxon>Bacteria</taxon>
        <taxon>Pseudomonadati</taxon>
        <taxon>Spirochaetota</taxon>
        <taxon>Spirochaetia</taxon>
        <taxon>Spirochaetales</taxon>
        <taxon>Treponemataceae</taxon>
        <taxon>Treponema</taxon>
    </lineage>
</organism>
<name>Y930_TREPA</name>
<accession>O83900</accession>